<sequence length="143" mass="15224">MAKKKAISWIKLQVPAAQAAPGAKIGQALGPHGVSGPQFVKEFNERTAKMDPGIVVPVIITVYSDKSFSFIVKTPPASILIKKTIGIESGSKKSNTDKVGTISKEKLMEIVKIKMPDLNAKSESAAFKIISGSARSMGVEVEK</sequence>
<name>RL11_BORGP</name>
<dbReference type="EMBL" id="CP000013">
    <property type="protein sequence ID" value="AAU07246.1"/>
    <property type="molecule type" value="Genomic_DNA"/>
</dbReference>
<dbReference type="RefSeq" id="WP_011193719.1">
    <property type="nucleotide sequence ID" value="NZ_CP028872.1"/>
</dbReference>
<dbReference type="SMR" id="Q661M5"/>
<dbReference type="GeneID" id="45161181"/>
<dbReference type="KEGG" id="bga:BG0394"/>
<dbReference type="eggNOG" id="COG0080">
    <property type="taxonomic scope" value="Bacteria"/>
</dbReference>
<dbReference type="HOGENOM" id="CLU_074237_2_1_12"/>
<dbReference type="OrthoDB" id="9802408at2"/>
<dbReference type="Proteomes" id="UP000002276">
    <property type="component" value="Chromosome"/>
</dbReference>
<dbReference type="GO" id="GO:0022625">
    <property type="term" value="C:cytosolic large ribosomal subunit"/>
    <property type="evidence" value="ECO:0007669"/>
    <property type="project" value="TreeGrafter"/>
</dbReference>
<dbReference type="GO" id="GO:0070180">
    <property type="term" value="F:large ribosomal subunit rRNA binding"/>
    <property type="evidence" value="ECO:0007669"/>
    <property type="project" value="UniProtKB-UniRule"/>
</dbReference>
<dbReference type="GO" id="GO:0003735">
    <property type="term" value="F:structural constituent of ribosome"/>
    <property type="evidence" value="ECO:0007669"/>
    <property type="project" value="InterPro"/>
</dbReference>
<dbReference type="GO" id="GO:0006412">
    <property type="term" value="P:translation"/>
    <property type="evidence" value="ECO:0007669"/>
    <property type="project" value="UniProtKB-UniRule"/>
</dbReference>
<dbReference type="CDD" id="cd00349">
    <property type="entry name" value="Ribosomal_L11"/>
    <property type="match status" value="1"/>
</dbReference>
<dbReference type="FunFam" id="1.10.10.250:FF:000001">
    <property type="entry name" value="50S ribosomal protein L11"/>
    <property type="match status" value="1"/>
</dbReference>
<dbReference type="FunFam" id="3.30.1550.10:FF:000006">
    <property type="entry name" value="50S ribosomal protein L11"/>
    <property type="match status" value="1"/>
</dbReference>
<dbReference type="Gene3D" id="1.10.10.250">
    <property type="entry name" value="Ribosomal protein L11, C-terminal domain"/>
    <property type="match status" value="1"/>
</dbReference>
<dbReference type="Gene3D" id="3.30.1550.10">
    <property type="entry name" value="Ribosomal protein L11/L12, N-terminal domain"/>
    <property type="match status" value="1"/>
</dbReference>
<dbReference type="HAMAP" id="MF_00736">
    <property type="entry name" value="Ribosomal_uL11"/>
    <property type="match status" value="1"/>
</dbReference>
<dbReference type="InterPro" id="IPR000911">
    <property type="entry name" value="Ribosomal_uL11"/>
</dbReference>
<dbReference type="InterPro" id="IPR006519">
    <property type="entry name" value="Ribosomal_uL11_bac-typ"/>
</dbReference>
<dbReference type="InterPro" id="IPR020783">
    <property type="entry name" value="Ribosomal_uL11_C"/>
</dbReference>
<dbReference type="InterPro" id="IPR036769">
    <property type="entry name" value="Ribosomal_uL11_C_sf"/>
</dbReference>
<dbReference type="InterPro" id="IPR020785">
    <property type="entry name" value="Ribosomal_uL11_CS"/>
</dbReference>
<dbReference type="InterPro" id="IPR020784">
    <property type="entry name" value="Ribosomal_uL11_N"/>
</dbReference>
<dbReference type="InterPro" id="IPR036796">
    <property type="entry name" value="Ribosomal_uL11_N_sf"/>
</dbReference>
<dbReference type="NCBIfam" id="TIGR01632">
    <property type="entry name" value="L11_bact"/>
    <property type="match status" value="1"/>
</dbReference>
<dbReference type="PANTHER" id="PTHR11661">
    <property type="entry name" value="60S RIBOSOMAL PROTEIN L12"/>
    <property type="match status" value="1"/>
</dbReference>
<dbReference type="PANTHER" id="PTHR11661:SF1">
    <property type="entry name" value="LARGE RIBOSOMAL SUBUNIT PROTEIN UL11M"/>
    <property type="match status" value="1"/>
</dbReference>
<dbReference type="Pfam" id="PF00298">
    <property type="entry name" value="Ribosomal_L11"/>
    <property type="match status" value="1"/>
</dbReference>
<dbReference type="Pfam" id="PF03946">
    <property type="entry name" value="Ribosomal_L11_N"/>
    <property type="match status" value="1"/>
</dbReference>
<dbReference type="SMART" id="SM00649">
    <property type="entry name" value="RL11"/>
    <property type="match status" value="1"/>
</dbReference>
<dbReference type="SUPFAM" id="SSF54747">
    <property type="entry name" value="Ribosomal L11/L12e N-terminal domain"/>
    <property type="match status" value="1"/>
</dbReference>
<dbReference type="SUPFAM" id="SSF46906">
    <property type="entry name" value="Ribosomal protein L11, C-terminal domain"/>
    <property type="match status" value="1"/>
</dbReference>
<dbReference type="PROSITE" id="PS00359">
    <property type="entry name" value="RIBOSOMAL_L11"/>
    <property type="match status" value="1"/>
</dbReference>
<gene>
    <name evidence="1" type="primary">rplK</name>
    <name type="ordered locus">BG0394</name>
</gene>
<accession>Q661M5</accession>
<feature type="chain" id="PRO_0000104253" description="Large ribosomal subunit protein uL11">
    <location>
        <begin position="1"/>
        <end position="143"/>
    </location>
</feature>
<comment type="function">
    <text evidence="1">Forms part of the ribosomal stalk which helps the ribosome interact with GTP-bound translation factors.</text>
</comment>
<comment type="subunit">
    <text evidence="1">Part of the ribosomal stalk of the 50S ribosomal subunit. Interacts with L10 and the large rRNA to form the base of the stalk. L10 forms an elongated spine to which L12 dimers bind in a sequential fashion forming a multimeric L10(L12)X complex.</text>
</comment>
<comment type="PTM">
    <text evidence="1">One or more lysine residues are methylated.</text>
</comment>
<comment type="similarity">
    <text evidence="1">Belongs to the universal ribosomal protein uL11 family.</text>
</comment>
<evidence type="ECO:0000255" key="1">
    <source>
        <dbReference type="HAMAP-Rule" id="MF_00736"/>
    </source>
</evidence>
<evidence type="ECO:0000305" key="2"/>
<protein>
    <recommendedName>
        <fullName evidence="1">Large ribosomal subunit protein uL11</fullName>
    </recommendedName>
    <alternativeName>
        <fullName evidence="2">50S ribosomal protein L11</fullName>
    </alternativeName>
</protein>
<organism>
    <name type="scientific">Borrelia garinii subsp. bavariensis (strain ATCC BAA-2496 / DSM 23469 / PBi)</name>
    <name type="common">Borreliella bavariensis</name>
    <dbReference type="NCBI Taxonomy" id="290434"/>
    <lineage>
        <taxon>Bacteria</taxon>
        <taxon>Pseudomonadati</taxon>
        <taxon>Spirochaetota</taxon>
        <taxon>Spirochaetia</taxon>
        <taxon>Spirochaetales</taxon>
        <taxon>Borreliaceae</taxon>
        <taxon>Borreliella</taxon>
    </lineage>
</organism>
<keyword id="KW-0488">Methylation</keyword>
<keyword id="KW-0687">Ribonucleoprotein</keyword>
<keyword id="KW-0689">Ribosomal protein</keyword>
<keyword id="KW-0694">RNA-binding</keyword>
<keyword id="KW-0699">rRNA-binding</keyword>
<proteinExistence type="inferred from homology"/>
<reference key="1">
    <citation type="journal article" date="2004" name="Nucleic Acids Res.">
        <title>Comparative analysis of the Borrelia garinii genome.</title>
        <authorList>
            <person name="Gloeckner G."/>
            <person name="Lehmann R."/>
            <person name="Romualdi A."/>
            <person name="Pradella S."/>
            <person name="Schulte-Spechtel U."/>
            <person name="Schilhabel M."/>
            <person name="Wilske B."/>
            <person name="Suehnel J."/>
            <person name="Platzer M."/>
        </authorList>
    </citation>
    <scope>NUCLEOTIDE SEQUENCE [LARGE SCALE GENOMIC DNA]</scope>
    <source>
        <strain>ATCC BAA-2496 / DSM 23469 / PBi</strain>
    </source>
</reference>